<name>YDER_ECOLI</name>
<gene>
    <name type="primary">ydeR</name>
    <name type="ordered locus">b1503</name>
    <name type="ordered locus">JW1497</name>
</gene>
<comment type="subcellular location">
    <subcellularLocation>
        <location evidence="2">Fimbrium</location>
    </subcellularLocation>
</comment>
<comment type="similarity">
    <text evidence="2">Belongs to the fimbrial protein family.</text>
</comment>
<sequence length="167" mass="18144">MKRLHKRFLLATFCALFTATLQAADVTITVNGRVVAKPCTIQTKEANVNLGDLYTRNLQQPGSASGWHNITLSLTDCPVETSAVTAIVTGSTDNTGYYKNEGTAENIQIELRDDQDAALKNGDSKTVIVDEITRNAQFPLKARAITVNGNASQGTIEALINVIYTWQ</sequence>
<accession>P77294</accession>
<dbReference type="EMBL" id="U00096">
    <property type="protein sequence ID" value="AAC74576.1"/>
    <property type="molecule type" value="Genomic_DNA"/>
</dbReference>
<dbReference type="EMBL" id="AP009048">
    <property type="protein sequence ID" value="BAA15176.1"/>
    <property type="molecule type" value="Genomic_DNA"/>
</dbReference>
<dbReference type="PIR" id="B64904">
    <property type="entry name" value="B64904"/>
</dbReference>
<dbReference type="RefSeq" id="NP_416020.1">
    <property type="nucleotide sequence ID" value="NC_000913.3"/>
</dbReference>
<dbReference type="RefSeq" id="WP_000825452.1">
    <property type="nucleotide sequence ID" value="NZ_SSZK01000001.1"/>
</dbReference>
<dbReference type="SMR" id="P77294"/>
<dbReference type="BioGRID" id="4261138">
    <property type="interactions" value="11"/>
</dbReference>
<dbReference type="DIP" id="DIP-11685N"/>
<dbReference type="FunCoup" id="P77294">
    <property type="interactions" value="17"/>
</dbReference>
<dbReference type="STRING" id="511145.b1503"/>
<dbReference type="PaxDb" id="511145-b1503"/>
<dbReference type="EnsemblBacteria" id="AAC74576">
    <property type="protein sequence ID" value="AAC74576"/>
    <property type="gene ID" value="b1503"/>
</dbReference>
<dbReference type="GeneID" id="946049"/>
<dbReference type="KEGG" id="ecj:JW1497"/>
<dbReference type="KEGG" id="eco:b1503"/>
<dbReference type="KEGG" id="ecoc:C3026_08700"/>
<dbReference type="PATRIC" id="fig|1411691.4.peg.763"/>
<dbReference type="EchoBASE" id="EB3561"/>
<dbReference type="eggNOG" id="COG3539">
    <property type="taxonomic scope" value="Bacteria"/>
</dbReference>
<dbReference type="HOGENOM" id="CLU_088965_6_1_6"/>
<dbReference type="InParanoid" id="P77294"/>
<dbReference type="OMA" id="PCVFNGG"/>
<dbReference type="OrthoDB" id="6465350at2"/>
<dbReference type="PhylomeDB" id="P77294"/>
<dbReference type="BioCyc" id="EcoCyc:G6793-MONOMER"/>
<dbReference type="PRO" id="PR:P77294"/>
<dbReference type="Proteomes" id="UP000000625">
    <property type="component" value="Chromosome"/>
</dbReference>
<dbReference type="GO" id="GO:0009289">
    <property type="term" value="C:pilus"/>
    <property type="evidence" value="ECO:0000318"/>
    <property type="project" value="GO_Central"/>
</dbReference>
<dbReference type="GO" id="GO:0043709">
    <property type="term" value="P:cell adhesion involved in single-species biofilm formation"/>
    <property type="evidence" value="ECO:0000318"/>
    <property type="project" value="GO_Central"/>
</dbReference>
<dbReference type="Gene3D" id="2.60.40.1090">
    <property type="entry name" value="Fimbrial-type adhesion domain"/>
    <property type="match status" value="1"/>
</dbReference>
<dbReference type="InterPro" id="IPR000259">
    <property type="entry name" value="Adhesion_dom_fimbrial"/>
</dbReference>
<dbReference type="InterPro" id="IPR036937">
    <property type="entry name" value="Adhesion_dom_fimbrial_sf"/>
</dbReference>
<dbReference type="InterPro" id="IPR008966">
    <property type="entry name" value="Adhesion_dom_sf"/>
</dbReference>
<dbReference type="InterPro" id="IPR050263">
    <property type="entry name" value="Bact_Fimbrial_Adh_Pro"/>
</dbReference>
<dbReference type="PANTHER" id="PTHR33420">
    <property type="entry name" value="FIMBRIAL SUBUNIT ELFA-RELATED"/>
    <property type="match status" value="1"/>
</dbReference>
<dbReference type="PANTHER" id="PTHR33420:SF27">
    <property type="entry name" value="PROTEIN FIMG"/>
    <property type="match status" value="1"/>
</dbReference>
<dbReference type="Pfam" id="PF00419">
    <property type="entry name" value="Fimbrial"/>
    <property type="match status" value="1"/>
</dbReference>
<dbReference type="SUPFAM" id="SSF49401">
    <property type="entry name" value="Bacterial adhesins"/>
    <property type="match status" value="1"/>
</dbReference>
<keyword id="KW-1015">Disulfide bond</keyword>
<keyword id="KW-0281">Fimbrium</keyword>
<keyword id="KW-1185">Reference proteome</keyword>
<keyword id="KW-0732">Signal</keyword>
<proteinExistence type="inferred from homology"/>
<feature type="signal peptide" evidence="1">
    <location>
        <begin position="1"/>
        <end position="23"/>
    </location>
</feature>
<feature type="chain" id="PRO_0000009258" description="Uncharacterized fimbrial-like protein YdeR">
    <location>
        <begin position="24"/>
        <end position="167"/>
    </location>
</feature>
<feature type="disulfide bond" evidence="2">
    <location>
        <begin position="39"/>
        <end position="77"/>
    </location>
</feature>
<reference key="1">
    <citation type="journal article" date="1996" name="DNA Res.">
        <title>A 570-kb DNA sequence of the Escherichia coli K-12 genome corresponding to the 28.0-40.1 min region on the linkage map.</title>
        <authorList>
            <person name="Aiba H."/>
            <person name="Baba T."/>
            <person name="Fujita K."/>
            <person name="Hayashi K."/>
            <person name="Inada T."/>
            <person name="Isono K."/>
            <person name="Itoh T."/>
            <person name="Kasai H."/>
            <person name="Kashimoto K."/>
            <person name="Kimura S."/>
            <person name="Kitakawa M."/>
            <person name="Kitagawa M."/>
            <person name="Makino K."/>
            <person name="Miki T."/>
            <person name="Mizobuchi K."/>
            <person name="Mori H."/>
            <person name="Mori T."/>
            <person name="Motomura K."/>
            <person name="Nakade S."/>
            <person name="Nakamura Y."/>
            <person name="Nashimoto H."/>
            <person name="Nishio Y."/>
            <person name="Oshima T."/>
            <person name="Saito N."/>
            <person name="Sampei G."/>
            <person name="Seki Y."/>
            <person name="Sivasundaram S."/>
            <person name="Tagami H."/>
            <person name="Takeda J."/>
            <person name="Takemoto K."/>
            <person name="Takeuchi Y."/>
            <person name="Wada C."/>
            <person name="Yamamoto Y."/>
            <person name="Horiuchi T."/>
        </authorList>
    </citation>
    <scope>NUCLEOTIDE SEQUENCE [LARGE SCALE GENOMIC DNA]</scope>
    <source>
        <strain>K12 / W3110 / ATCC 27325 / DSM 5911</strain>
    </source>
</reference>
<reference key="2">
    <citation type="journal article" date="1997" name="Science">
        <title>The complete genome sequence of Escherichia coli K-12.</title>
        <authorList>
            <person name="Blattner F.R."/>
            <person name="Plunkett G. III"/>
            <person name="Bloch C.A."/>
            <person name="Perna N.T."/>
            <person name="Burland V."/>
            <person name="Riley M."/>
            <person name="Collado-Vides J."/>
            <person name="Glasner J.D."/>
            <person name="Rode C.K."/>
            <person name="Mayhew G.F."/>
            <person name="Gregor J."/>
            <person name="Davis N.W."/>
            <person name="Kirkpatrick H.A."/>
            <person name="Goeden M.A."/>
            <person name="Rose D.J."/>
            <person name="Mau B."/>
            <person name="Shao Y."/>
        </authorList>
    </citation>
    <scope>NUCLEOTIDE SEQUENCE [LARGE SCALE GENOMIC DNA]</scope>
    <source>
        <strain>K12 / MG1655 / ATCC 47076</strain>
    </source>
</reference>
<reference key="3">
    <citation type="journal article" date="2006" name="Mol. Syst. Biol.">
        <title>Highly accurate genome sequences of Escherichia coli K-12 strains MG1655 and W3110.</title>
        <authorList>
            <person name="Hayashi K."/>
            <person name="Morooka N."/>
            <person name="Yamamoto Y."/>
            <person name="Fujita K."/>
            <person name="Isono K."/>
            <person name="Choi S."/>
            <person name="Ohtsubo E."/>
            <person name="Baba T."/>
            <person name="Wanner B.L."/>
            <person name="Mori H."/>
            <person name="Horiuchi T."/>
        </authorList>
    </citation>
    <scope>NUCLEOTIDE SEQUENCE [LARGE SCALE GENOMIC DNA]</scope>
    <source>
        <strain>K12 / W3110 / ATCC 27325 / DSM 5911</strain>
    </source>
</reference>
<evidence type="ECO:0000255" key="1"/>
<evidence type="ECO:0000305" key="2"/>
<organism>
    <name type="scientific">Escherichia coli (strain K12)</name>
    <dbReference type="NCBI Taxonomy" id="83333"/>
    <lineage>
        <taxon>Bacteria</taxon>
        <taxon>Pseudomonadati</taxon>
        <taxon>Pseudomonadota</taxon>
        <taxon>Gammaproteobacteria</taxon>
        <taxon>Enterobacterales</taxon>
        <taxon>Enterobacteriaceae</taxon>
        <taxon>Escherichia</taxon>
    </lineage>
</organism>
<protein>
    <recommendedName>
        <fullName>Uncharacterized fimbrial-like protein YdeR</fullName>
    </recommendedName>
</protein>